<organism>
    <name type="scientific">Cyanophora paradoxa</name>
    <dbReference type="NCBI Taxonomy" id="2762"/>
    <lineage>
        <taxon>Eukaryota</taxon>
        <taxon>Glaucocystophyceae</taxon>
        <taxon>Cyanophoraceae</taxon>
        <taxon>Cyanophora</taxon>
    </lineage>
</organism>
<reference key="1">
    <citation type="journal article" date="1995" name="Plant Mol. Biol. Rep.">
        <title>Nucleotide sequence of the cyanelle DNA from Cyanophora paradoxa.</title>
        <authorList>
            <person name="Stirewalt V.L."/>
            <person name="Michalowski C.B."/>
            <person name="Loeffelhardt W."/>
            <person name="Bohnert H.J."/>
            <person name="Bryant D.A."/>
        </authorList>
    </citation>
    <scope>NUCLEOTIDE SEQUENCE [LARGE SCALE GENOMIC DNA]</scope>
    <source>
        <strain>UTEX LB 555 / Pringsheim</strain>
    </source>
</reference>
<reference key="2">
    <citation type="book" date="1997" name="Eukaryotism and symbiosis">
        <title>The complete sequence of the cyanelle genome of Cyanophora paradoxa: the genetic complexity of a primitive plastid.</title>
        <editorList>
            <person name="Schenk H.E.A."/>
            <person name="Herrmann R."/>
            <person name="Jeon K.W."/>
            <person name="Mueller N.E."/>
            <person name="Schwemmler W."/>
        </editorList>
        <authorList>
            <person name="Loeffelhardt W."/>
            <person name="Stirewalt V.L."/>
            <person name="Michalowski C.B."/>
            <person name="Annarella M."/>
            <person name="Farley J.Y."/>
            <person name="Schluchter W.M."/>
            <person name="Chung S."/>
            <person name="Newmann-Spallart C."/>
            <person name="Steiner J.M."/>
            <person name="Jakowitsch J."/>
            <person name="Bohnert H.J."/>
            <person name="Bryant D.A."/>
        </authorList>
    </citation>
    <scope>NUCLEOTIDE SEQUENCE [LARGE SCALE GENOMIC DNA]</scope>
    <source>
        <strain>UTEX LB 555 / Pringsheim</strain>
    </source>
</reference>
<geneLocation type="cyanelle"/>
<sequence length="172" mass="20520">MDNFLFSFYIIFFSLIVLALISFLIQEIQKSRFLDLEITRLRKKIYQEKATEKDYNNLASIYIKKKLYSQAQKEFLKILENKNLDKSQLALIYNSLGYICSAQEQYELAIEYYKKALFYIPDFILARINLARIFELKNLKTEAINMYQEVLIFDPKNQLAKRKLSIIENLIL</sequence>
<name>YCF37_CYAPA</name>
<proteinExistence type="inferred from homology"/>
<accession>P48277</accession>
<gene>
    <name type="primary">ycf37</name>
</gene>
<comment type="subcellular location">
    <subcellularLocation>
        <location>Plastid</location>
        <location>Cyanelle</location>
    </subcellularLocation>
</comment>
<comment type="similarity">
    <text evidence="1">Belongs to the ycf37 family.</text>
</comment>
<protein>
    <recommendedName>
        <fullName>Uncharacterized protein ycf37</fullName>
    </recommendedName>
</protein>
<keyword id="KW-0194">Cyanelle</keyword>
<keyword id="KW-0934">Plastid</keyword>
<keyword id="KW-0677">Repeat</keyword>
<keyword id="KW-0802">TPR repeat</keyword>
<dbReference type="EMBL" id="U30821">
    <property type="protein sequence ID" value="AAA81175.1"/>
    <property type="molecule type" value="Genomic_DNA"/>
</dbReference>
<dbReference type="PIR" id="T06832">
    <property type="entry name" value="T06832"/>
</dbReference>
<dbReference type="RefSeq" id="NP_043144.1">
    <property type="nucleotide sequence ID" value="NC_001675.1"/>
</dbReference>
<dbReference type="SMR" id="P48277"/>
<dbReference type="GeneID" id="801644"/>
<dbReference type="GO" id="GO:0009842">
    <property type="term" value="C:cyanelle"/>
    <property type="evidence" value="ECO:0007669"/>
    <property type="project" value="UniProtKB-SubCell"/>
</dbReference>
<dbReference type="Gene3D" id="1.25.40.10">
    <property type="entry name" value="Tetratricopeptide repeat domain"/>
    <property type="match status" value="1"/>
</dbReference>
<dbReference type="InterPro" id="IPR011990">
    <property type="entry name" value="TPR-like_helical_dom_sf"/>
</dbReference>
<dbReference type="InterPro" id="IPR019734">
    <property type="entry name" value="TPR_rpt"/>
</dbReference>
<dbReference type="Pfam" id="PF13424">
    <property type="entry name" value="TPR_12"/>
    <property type="match status" value="1"/>
</dbReference>
<dbReference type="SMART" id="SM00028">
    <property type="entry name" value="TPR"/>
    <property type="match status" value="3"/>
</dbReference>
<dbReference type="SUPFAM" id="SSF48452">
    <property type="entry name" value="TPR-like"/>
    <property type="match status" value="1"/>
</dbReference>
<dbReference type="PROSITE" id="PS50005">
    <property type="entry name" value="TPR"/>
    <property type="match status" value="3"/>
</dbReference>
<dbReference type="PROSITE" id="PS50293">
    <property type="entry name" value="TPR_REGION"/>
    <property type="match status" value="1"/>
</dbReference>
<feature type="chain" id="PRO_0000217355" description="Uncharacterized protein ycf37">
    <location>
        <begin position="1"/>
        <end position="172"/>
    </location>
</feature>
<feature type="repeat" description="TPR 1">
    <location>
        <begin position="52"/>
        <end position="85"/>
    </location>
</feature>
<feature type="repeat" description="TPR 2">
    <location>
        <begin position="90"/>
        <end position="123"/>
    </location>
</feature>
<feature type="repeat" description="TPR 3">
    <location>
        <begin position="124"/>
        <end position="157"/>
    </location>
</feature>
<evidence type="ECO:0000305" key="1"/>